<keyword id="KW-0131">Cell cycle</keyword>
<keyword id="KW-0132">Cell division</keyword>
<keyword id="KW-0997">Cell inner membrane</keyword>
<keyword id="KW-1003">Cell membrane</keyword>
<keyword id="KW-0133">Cell shape</keyword>
<keyword id="KW-0961">Cell wall biogenesis/degradation</keyword>
<keyword id="KW-0328">Glycosyltransferase</keyword>
<keyword id="KW-0472">Membrane</keyword>
<keyword id="KW-0573">Peptidoglycan synthesis</keyword>
<keyword id="KW-0808">Transferase</keyword>
<organism>
    <name type="scientific">Vibrio vulnificus (strain YJ016)</name>
    <dbReference type="NCBI Taxonomy" id="196600"/>
    <lineage>
        <taxon>Bacteria</taxon>
        <taxon>Pseudomonadati</taxon>
        <taxon>Pseudomonadota</taxon>
        <taxon>Gammaproteobacteria</taxon>
        <taxon>Vibrionales</taxon>
        <taxon>Vibrionaceae</taxon>
        <taxon>Vibrio</taxon>
    </lineage>
</organism>
<feature type="chain" id="PRO_0000109238" description="UDP-N-acetylglucosamine--N-acetylmuramyl-(pentapeptide) pyrophosphoryl-undecaprenol N-acetylglucosamine transferase">
    <location>
        <begin position="1"/>
        <end position="355"/>
    </location>
</feature>
<feature type="binding site" evidence="1">
    <location>
        <begin position="14"/>
        <end position="16"/>
    </location>
    <ligand>
        <name>UDP-N-acetyl-alpha-D-glucosamine</name>
        <dbReference type="ChEBI" id="CHEBI:57705"/>
    </ligand>
</feature>
<feature type="binding site" evidence="1">
    <location>
        <position position="126"/>
    </location>
    <ligand>
        <name>UDP-N-acetyl-alpha-D-glucosamine</name>
        <dbReference type="ChEBI" id="CHEBI:57705"/>
    </ligand>
</feature>
<feature type="binding site" evidence="1">
    <location>
        <position position="162"/>
    </location>
    <ligand>
        <name>UDP-N-acetyl-alpha-D-glucosamine</name>
        <dbReference type="ChEBI" id="CHEBI:57705"/>
    </ligand>
</feature>
<feature type="binding site" evidence="1">
    <location>
        <position position="190"/>
    </location>
    <ligand>
        <name>UDP-N-acetyl-alpha-D-glucosamine</name>
        <dbReference type="ChEBI" id="CHEBI:57705"/>
    </ligand>
</feature>
<feature type="binding site" evidence="1">
    <location>
        <position position="243"/>
    </location>
    <ligand>
        <name>UDP-N-acetyl-alpha-D-glucosamine</name>
        <dbReference type="ChEBI" id="CHEBI:57705"/>
    </ligand>
</feature>
<feature type="binding site" evidence="1">
    <location>
        <begin position="262"/>
        <end position="267"/>
    </location>
    <ligand>
        <name>UDP-N-acetyl-alpha-D-glucosamine</name>
        <dbReference type="ChEBI" id="CHEBI:57705"/>
    </ligand>
</feature>
<feature type="binding site" evidence="1">
    <location>
        <position position="287"/>
    </location>
    <ligand>
        <name>UDP-N-acetyl-alpha-D-glucosamine</name>
        <dbReference type="ChEBI" id="CHEBI:57705"/>
    </ligand>
</feature>
<reference key="1">
    <citation type="journal article" date="2003" name="Genome Res.">
        <title>Comparative genome analysis of Vibrio vulnificus, a marine pathogen.</title>
        <authorList>
            <person name="Chen C.-Y."/>
            <person name="Wu K.-M."/>
            <person name="Chang Y.-C."/>
            <person name="Chang C.-H."/>
            <person name="Tsai H.-C."/>
            <person name="Liao T.-L."/>
            <person name="Liu Y.-M."/>
            <person name="Chen H.-J."/>
            <person name="Shen A.B.-T."/>
            <person name="Li J.-C."/>
            <person name="Su T.-L."/>
            <person name="Shao C.-P."/>
            <person name="Lee C.-T."/>
            <person name="Hor L.-I."/>
            <person name="Tsai S.-F."/>
        </authorList>
    </citation>
    <scope>NUCLEOTIDE SEQUENCE [LARGE SCALE GENOMIC DNA]</scope>
    <source>
        <strain>YJ016</strain>
    </source>
</reference>
<evidence type="ECO:0000255" key="1">
    <source>
        <dbReference type="HAMAP-Rule" id="MF_00033"/>
    </source>
</evidence>
<evidence type="ECO:0000305" key="2"/>
<proteinExistence type="inferred from homology"/>
<gene>
    <name evidence="1" type="primary">murG</name>
    <name type="ordered locus">VV0614</name>
</gene>
<comment type="function">
    <text evidence="1">Cell wall formation. Catalyzes the transfer of a GlcNAc subunit on undecaprenyl-pyrophosphoryl-MurNAc-pentapeptide (lipid intermediate I) to form undecaprenyl-pyrophosphoryl-MurNAc-(pentapeptide)GlcNAc (lipid intermediate II).</text>
</comment>
<comment type="catalytic activity">
    <reaction evidence="1">
        <text>di-trans,octa-cis-undecaprenyl diphospho-N-acetyl-alpha-D-muramoyl-L-alanyl-D-glutamyl-meso-2,6-diaminopimeloyl-D-alanyl-D-alanine + UDP-N-acetyl-alpha-D-glucosamine = di-trans,octa-cis-undecaprenyl diphospho-[N-acetyl-alpha-D-glucosaminyl-(1-&gt;4)]-N-acetyl-alpha-D-muramoyl-L-alanyl-D-glutamyl-meso-2,6-diaminopimeloyl-D-alanyl-D-alanine + UDP + H(+)</text>
        <dbReference type="Rhea" id="RHEA:31227"/>
        <dbReference type="ChEBI" id="CHEBI:15378"/>
        <dbReference type="ChEBI" id="CHEBI:57705"/>
        <dbReference type="ChEBI" id="CHEBI:58223"/>
        <dbReference type="ChEBI" id="CHEBI:61387"/>
        <dbReference type="ChEBI" id="CHEBI:61388"/>
        <dbReference type="EC" id="2.4.1.227"/>
    </reaction>
</comment>
<comment type="pathway">
    <text evidence="1">Cell wall biogenesis; peptidoglycan biosynthesis.</text>
</comment>
<comment type="subcellular location">
    <subcellularLocation>
        <location evidence="1">Cell inner membrane</location>
        <topology evidence="1">Peripheral membrane protein</topology>
        <orientation evidence="1">Cytoplasmic side</orientation>
    </subcellularLocation>
</comment>
<comment type="similarity">
    <text evidence="1">Belongs to the glycosyltransferase 28 family. MurG subfamily.</text>
</comment>
<comment type="sequence caution" evidence="2">
    <conflict type="erroneous initiation">
        <sequence resource="EMBL-CDS" id="BAC93378"/>
    </conflict>
</comment>
<dbReference type="EC" id="2.4.1.227" evidence="1"/>
<dbReference type="EMBL" id="BA000037">
    <property type="protein sequence ID" value="BAC93378.1"/>
    <property type="status" value="ALT_INIT"/>
    <property type="molecule type" value="Genomic_DNA"/>
</dbReference>
<dbReference type="RefSeq" id="WP_043877063.1">
    <property type="nucleotide sequence ID" value="NC_005139.1"/>
</dbReference>
<dbReference type="SMR" id="Q7MNV1"/>
<dbReference type="STRING" id="672.VV93_v1c05570"/>
<dbReference type="CAZy" id="GT28">
    <property type="family name" value="Glycosyltransferase Family 28"/>
</dbReference>
<dbReference type="KEGG" id="vvy:VV0614"/>
<dbReference type="PATRIC" id="fig|196600.6.peg.633"/>
<dbReference type="eggNOG" id="COG0707">
    <property type="taxonomic scope" value="Bacteria"/>
</dbReference>
<dbReference type="HOGENOM" id="CLU_037404_2_0_6"/>
<dbReference type="UniPathway" id="UPA00219"/>
<dbReference type="Proteomes" id="UP000002675">
    <property type="component" value="Chromosome I"/>
</dbReference>
<dbReference type="GO" id="GO:0005886">
    <property type="term" value="C:plasma membrane"/>
    <property type="evidence" value="ECO:0007669"/>
    <property type="project" value="UniProtKB-SubCell"/>
</dbReference>
<dbReference type="GO" id="GO:0051991">
    <property type="term" value="F:UDP-N-acetyl-D-glucosamine:N-acetylmuramoyl-L-alanyl-D-glutamyl-meso-2,6-diaminopimelyl-D-alanyl-D-alanine-diphosphoundecaprenol 4-beta-N-acetylglucosaminlytransferase activity"/>
    <property type="evidence" value="ECO:0007669"/>
    <property type="project" value="RHEA"/>
</dbReference>
<dbReference type="GO" id="GO:0050511">
    <property type="term" value="F:undecaprenyldiphospho-muramoylpentapeptide beta-N-acetylglucosaminyltransferase activity"/>
    <property type="evidence" value="ECO:0007669"/>
    <property type="project" value="UniProtKB-UniRule"/>
</dbReference>
<dbReference type="GO" id="GO:0005975">
    <property type="term" value="P:carbohydrate metabolic process"/>
    <property type="evidence" value="ECO:0007669"/>
    <property type="project" value="InterPro"/>
</dbReference>
<dbReference type="GO" id="GO:0051301">
    <property type="term" value="P:cell division"/>
    <property type="evidence" value="ECO:0007669"/>
    <property type="project" value="UniProtKB-KW"/>
</dbReference>
<dbReference type="GO" id="GO:0071555">
    <property type="term" value="P:cell wall organization"/>
    <property type="evidence" value="ECO:0007669"/>
    <property type="project" value="UniProtKB-KW"/>
</dbReference>
<dbReference type="GO" id="GO:0030259">
    <property type="term" value="P:lipid glycosylation"/>
    <property type="evidence" value="ECO:0007669"/>
    <property type="project" value="UniProtKB-UniRule"/>
</dbReference>
<dbReference type="GO" id="GO:0009252">
    <property type="term" value="P:peptidoglycan biosynthetic process"/>
    <property type="evidence" value="ECO:0007669"/>
    <property type="project" value="UniProtKB-UniRule"/>
</dbReference>
<dbReference type="GO" id="GO:0008360">
    <property type="term" value="P:regulation of cell shape"/>
    <property type="evidence" value="ECO:0007669"/>
    <property type="project" value="UniProtKB-KW"/>
</dbReference>
<dbReference type="CDD" id="cd03785">
    <property type="entry name" value="GT28_MurG"/>
    <property type="match status" value="1"/>
</dbReference>
<dbReference type="Gene3D" id="3.40.50.2000">
    <property type="entry name" value="Glycogen Phosphorylase B"/>
    <property type="match status" value="2"/>
</dbReference>
<dbReference type="HAMAP" id="MF_00033">
    <property type="entry name" value="MurG"/>
    <property type="match status" value="1"/>
</dbReference>
<dbReference type="InterPro" id="IPR006009">
    <property type="entry name" value="GlcNAc_MurG"/>
</dbReference>
<dbReference type="InterPro" id="IPR007235">
    <property type="entry name" value="Glyco_trans_28_C"/>
</dbReference>
<dbReference type="InterPro" id="IPR004276">
    <property type="entry name" value="GlycoTrans_28_N"/>
</dbReference>
<dbReference type="NCBIfam" id="TIGR01133">
    <property type="entry name" value="murG"/>
    <property type="match status" value="1"/>
</dbReference>
<dbReference type="PANTHER" id="PTHR21015:SF22">
    <property type="entry name" value="GLYCOSYLTRANSFERASE"/>
    <property type="match status" value="1"/>
</dbReference>
<dbReference type="PANTHER" id="PTHR21015">
    <property type="entry name" value="UDP-N-ACETYLGLUCOSAMINE--N-ACETYLMURAMYL-(PENTAPEPTIDE) PYROPHOSPHORYL-UNDECAPRENOL N-ACETYLGLUCOSAMINE TRANSFERASE 1"/>
    <property type="match status" value="1"/>
</dbReference>
<dbReference type="Pfam" id="PF04101">
    <property type="entry name" value="Glyco_tran_28_C"/>
    <property type="match status" value="1"/>
</dbReference>
<dbReference type="Pfam" id="PF03033">
    <property type="entry name" value="Glyco_transf_28"/>
    <property type="match status" value="1"/>
</dbReference>
<dbReference type="SUPFAM" id="SSF53756">
    <property type="entry name" value="UDP-Glycosyltransferase/glycogen phosphorylase"/>
    <property type="match status" value="1"/>
</dbReference>
<name>MURG_VIBVY</name>
<sequence length="355" mass="38170">MKKNKRLMVMAGGTGGHVFPGLAVAKKLQQQGWEIRWLGTADRMEAELVPKHGIDIDFIKVKGLRGQGIKRLVLAPFQILNAIFQAKAHIKRWQPDAVLGMGGYVSGPGGIAAWLSGIPVVLHEQNAVAGLTNHWLAKIAKKVFQAFPGAFKDAPVVGNPVREDVVALPDPMQRMQDREGAVRILVMGGSQGARILNQTMPQVMAQLGSGFEIRHQAGKGSADEVRLAYQQVGVEHVEVSEFIDDVAAQYAWADLLVCRSGALTVSEVSAAGVGAIFIPFMHKDRQQALNADHLVACGAALMIEQPQLTVDKLAGEIQKLGRDTLLSMALHARAAAQNNADQVVADAIVALTEQK</sequence>
<accession>Q7MNV1</accession>
<protein>
    <recommendedName>
        <fullName evidence="1">UDP-N-acetylglucosamine--N-acetylmuramyl-(pentapeptide) pyrophosphoryl-undecaprenol N-acetylglucosamine transferase</fullName>
        <ecNumber evidence="1">2.4.1.227</ecNumber>
    </recommendedName>
    <alternativeName>
        <fullName evidence="1">Undecaprenyl-PP-MurNAc-pentapeptide-UDPGlcNAc GlcNAc transferase</fullName>
    </alternativeName>
</protein>